<feature type="signal peptide" evidence="3">
    <location>
        <begin position="1"/>
        <end position="18"/>
    </location>
</feature>
<feature type="chain" id="PRO_0000035190" description="Beta-insect excitatory toxin LqhIT1b" evidence="8">
    <location>
        <begin position="19"/>
        <end position="88"/>
    </location>
</feature>
<feature type="domain" description="LCN-type CS-alpha/beta" evidence="4">
    <location>
        <begin position="20"/>
        <end position="83"/>
    </location>
</feature>
<feature type="disulfide bond" evidence="2">
    <location>
        <begin position="34"/>
        <end position="55"/>
    </location>
</feature>
<feature type="disulfide bond" evidence="2">
    <location>
        <begin position="40"/>
        <end position="60"/>
    </location>
</feature>
<feature type="disulfide bond" evidence="2">
    <location>
        <begin position="44"/>
        <end position="62"/>
    </location>
</feature>
<feature type="disulfide bond" evidence="2">
    <location>
        <begin position="56"/>
        <end position="82"/>
    </location>
</feature>
<organism>
    <name type="scientific">Leiurus hebraeus</name>
    <name type="common">Hebrew deathstalker scorpion</name>
    <name type="synonym">Leiurus quinquestriatus hebraeus</name>
    <dbReference type="NCBI Taxonomy" id="2899558"/>
    <lineage>
        <taxon>Eukaryota</taxon>
        <taxon>Metazoa</taxon>
        <taxon>Ecdysozoa</taxon>
        <taxon>Arthropoda</taxon>
        <taxon>Chelicerata</taxon>
        <taxon>Arachnida</taxon>
        <taxon>Scorpiones</taxon>
        <taxon>Buthida</taxon>
        <taxon>Buthoidea</taxon>
        <taxon>Buthidae</taxon>
        <taxon>Leiurus</taxon>
    </lineage>
</organism>
<reference key="1">
    <citation type="journal article" date="1999" name="J. Mol. Evol.">
        <title>Dynamic diversification from a putative common ancestor of scorpion toxins affecting sodium, potassium, and chloride channels.</title>
        <authorList>
            <person name="Froy O."/>
            <person name="Sagiv T."/>
            <person name="Poreh M."/>
            <person name="Urbach D."/>
            <person name="Zilberberg N."/>
            <person name="Gurevitz M."/>
        </authorList>
    </citation>
    <scope>NUCLEOTIDE SEQUENCE [GENOMIC DNA]</scope>
</reference>
<reference key="2">
    <citation type="journal article" date="2006" name="Toxicon">
        <title>Moving pieces in a taxonomic puzzle: venom 2D-LC/MS and data clustering analyses to infer phylogenetic relationships in some scorpions from the Buthidae family (Scorpiones).</title>
        <authorList>
            <person name="Nascimento D.G."/>
            <person name="Rates B."/>
            <person name="Santos D.M."/>
            <person name="Verano-Braga T."/>
            <person name="Barbosa-Silva A."/>
            <person name="Dutra A.A.A."/>
            <person name="Biondi I."/>
            <person name="Martin-Eauclaire M.-F."/>
            <person name="De Lima M.E."/>
            <person name="Pimenta A.M.C."/>
        </authorList>
    </citation>
    <scope>IDENTIFICATION BY MASS SPECTROMETRY</scope>
    <scope>SUBCELLULAR LOCATION</scope>
    <source>
        <tissue>Venom</tissue>
    </source>
</reference>
<keyword id="KW-1015">Disulfide bond</keyword>
<keyword id="KW-0872">Ion channel impairing toxin</keyword>
<keyword id="KW-0528">Neurotoxin</keyword>
<keyword id="KW-0964">Secreted</keyword>
<keyword id="KW-0732">Signal</keyword>
<keyword id="KW-0800">Toxin</keyword>
<keyword id="KW-0738">Voltage-gated sodium channel impairing toxin</keyword>
<sequence>MKFFLLFLVVLPIMGVLGKKNGYAVDSKGKAPECFLSNYCNNECTKVHYADKGYCCLLSCYCFGLNDDKKVLEISDTTKKYCDFTIIN</sequence>
<proteinExistence type="evidence at protein level"/>
<protein>
    <recommendedName>
        <fullName>Beta-insect excitatory toxin LqhIT1b</fullName>
    </recommendedName>
    <alternativeName>
        <fullName>Insect neurotoxin 1b</fullName>
    </alternativeName>
    <alternativeName>
        <fullName>Lqh IT1-b</fullName>
        <shortName>LqhIT1-b</shortName>
    </alternativeName>
    <alternativeName>
        <fullName>Lqh-xtrITb</fullName>
    </alternativeName>
</protein>
<dbReference type="SMR" id="P68722"/>
<dbReference type="GO" id="GO:0005576">
    <property type="term" value="C:extracellular region"/>
    <property type="evidence" value="ECO:0007669"/>
    <property type="project" value="UniProtKB-SubCell"/>
</dbReference>
<dbReference type="GO" id="GO:0019871">
    <property type="term" value="F:sodium channel inhibitor activity"/>
    <property type="evidence" value="ECO:0007669"/>
    <property type="project" value="InterPro"/>
</dbReference>
<dbReference type="GO" id="GO:0090729">
    <property type="term" value="F:toxin activity"/>
    <property type="evidence" value="ECO:0007669"/>
    <property type="project" value="UniProtKB-KW"/>
</dbReference>
<dbReference type="GO" id="GO:0006952">
    <property type="term" value="P:defense response"/>
    <property type="evidence" value="ECO:0007669"/>
    <property type="project" value="InterPro"/>
</dbReference>
<dbReference type="CDD" id="cd23106">
    <property type="entry name" value="neurotoxins_LC_scorpion"/>
    <property type="match status" value="1"/>
</dbReference>
<dbReference type="Gene3D" id="3.30.30.10">
    <property type="entry name" value="Knottin, scorpion toxin-like"/>
    <property type="match status" value="1"/>
</dbReference>
<dbReference type="InterPro" id="IPR044062">
    <property type="entry name" value="LCN-type_CS_alpha_beta_dom"/>
</dbReference>
<dbReference type="InterPro" id="IPR003614">
    <property type="entry name" value="Scorpion_toxin-like"/>
</dbReference>
<dbReference type="InterPro" id="IPR036574">
    <property type="entry name" value="Scorpion_toxin-like_sf"/>
</dbReference>
<dbReference type="InterPro" id="IPR002061">
    <property type="entry name" value="Scorpion_toxinL/defensin"/>
</dbReference>
<dbReference type="Pfam" id="PF00537">
    <property type="entry name" value="Toxin_3"/>
    <property type="match status" value="1"/>
</dbReference>
<dbReference type="SMART" id="SM00505">
    <property type="entry name" value="Knot1"/>
    <property type="match status" value="1"/>
</dbReference>
<dbReference type="SUPFAM" id="SSF57095">
    <property type="entry name" value="Scorpion toxin-like"/>
    <property type="match status" value="1"/>
</dbReference>
<dbReference type="PROSITE" id="PS51863">
    <property type="entry name" value="LCN_CSAB"/>
    <property type="match status" value="1"/>
</dbReference>
<comment type="function">
    <text evidence="1">Excitatory insect toxins induce a spastic paralysis. They bind voltage-independently at site-4 of sodium channels (Nav) and shift the voltage of activation toward more negative potentials thereby affecting sodium channel activation and promoting spontaneous and repetitive firing (By similarity).</text>
</comment>
<comment type="subcellular location">
    <subcellularLocation>
        <location evidence="5">Secreted</location>
    </subcellularLocation>
</comment>
<comment type="tissue specificity">
    <text evidence="7">Expressed by the venom gland.</text>
</comment>
<comment type="domain">
    <text evidence="6">Has the structural arrangement of an alpha-helix connected to antiparallel beta-sheets by disulfide bonds (CS-alpha/beta).</text>
</comment>
<comment type="similarity">
    <text evidence="6">Belongs to the long (4 C-C) scorpion toxin superfamily. Sodium channel inhibitor family. Beta subfamily.</text>
</comment>
<accession>P68722</accession>
<evidence type="ECO:0000250" key="1"/>
<evidence type="ECO:0000250" key="2">
    <source>
        <dbReference type="UniProtKB" id="P56637"/>
    </source>
</evidence>
<evidence type="ECO:0000255" key="3"/>
<evidence type="ECO:0000255" key="4">
    <source>
        <dbReference type="PROSITE-ProRule" id="PRU01210"/>
    </source>
</evidence>
<evidence type="ECO:0000269" key="5">
    <source>
    </source>
</evidence>
<evidence type="ECO:0000305" key="6"/>
<evidence type="ECO:0000305" key="7">
    <source>
    </source>
</evidence>
<evidence type="ECO:0000305" key="8">
    <source>
    </source>
</evidence>
<name>SIX1B_LEIHE</name>